<evidence type="ECO:0000250" key="1">
    <source>
        <dbReference type="UniProtKB" id="P97306"/>
    </source>
</evidence>
<evidence type="ECO:0000255" key="2">
    <source>
        <dbReference type="PROSITE-ProRule" id="PRU00192"/>
    </source>
</evidence>
<evidence type="ECO:0000255" key="3">
    <source>
        <dbReference type="PROSITE-ProRule" id="PRU00226"/>
    </source>
</evidence>
<evidence type="ECO:0000256" key="4">
    <source>
        <dbReference type="SAM" id="MobiDB-lite"/>
    </source>
</evidence>
<evidence type="ECO:0000269" key="5">
    <source>
    </source>
</evidence>
<evidence type="ECO:0000303" key="6">
    <source>
    </source>
</evidence>
<evidence type="ECO:0007744" key="7">
    <source>
        <dbReference type="PDB" id="6B25"/>
    </source>
</evidence>
<evidence type="ECO:0007829" key="8">
    <source>
        <dbReference type="PDB" id="6B25"/>
    </source>
</evidence>
<gene>
    <name type="primary">STAC</name>
    <name evidence="6" type="synonym">STAC1</name>
</gene>
<sequence>MIPPSSPREDGVDGLPKEAVGAEQPPSPASTSSQESKLQKLKRSLSFKTKSLRSKSADNFFQRTNSEDMKLQAHMVAEISPSSSPLPAPGSLTSTPARAGLHPGGKAHAFQEYIFKKPTFCDVCNHMIVGTNAKHGLRCKACKMSIHHKCTDGLAPQRCMGKLPKGFRRYYSSPLLIHEQFGCIKEVMPIACGNKVDPVYETLRFGTSLAQRTKKGSSGSGSDSPHRTSTSDLVEVPEEANGPGGGYDLRKRSNSVFTYPENGTDDFRDPAKNINHQGSLSKDPLQMNTYVALYKFVPQENEDLEMRPGDIITLLEDSNEDWWKGKIQDRIGFFPANFVQRLQQNEKIFRCVRTFIGCKEQGQITLKENQICVSSEEEQDGFIRVLSGKKKGLIPLDVLENI</sequence>
<dbReference type="EMBL" id="D86640">
    <property type="protein sequence ID" value="BAA13152.1"/>
    <property type="molecule type" value="mRNA"/>
</dbReference>
<dbReference type="EMBL" id="AK313493">
    <property type="protein sequence ID" value="BAG36275.1"/>
    <property type="molecule type" value="mRNA"/>
</dbReference>
<dbReference type="EMBL" id="CH471055">
    <property type="protein sequence ID" value="EAW64474.1"/>
    <property type="molecule type" value="Genomic_DNA"/>
</dbReference>
<dbReference type="CCDS" id="CCDS2662.1"/>
<dbReference type="PIR" id="JC5270">
    <property type="entry name" value="JC5270"/>
</dbReference>
<dbReference type="RefSeq" id="NP_003140.1">
    <property type="nucleotide sequence ID" value="NM_003149.3"/>
</dbReference>
<dbReference type="PDB" id="2DL4">
    <property type="method" value="NMR"/>
    <property type="chains" value="A=288-342"/>
</dbReference>
<dbReference type="PDB" id="6B25">
    <property type="method" value="X-ray"/>
    <property type="resolution" value="2.39 A"/>
    <property type="chains" value="A=288-402"/>
</dbReference>
<dbReference type="PDBsum" id="2DL4"/>
<dbReference type="PDBsum" id="6B25"/>
<dbReference type="BMRB" id="Q99469"/>
<dbReference type="SMR" id="Q99469"/>
<dbReference type="BioGRID" id="112646">
    <property type="interactions" value="30"/>
</dbReference>
<dbReference type="FunCoup" id="Q99469">
    <property type="interactions" value="80"/>
</dbReference>
<dbReference type="IntAct" id="Q99469">
    <property type="interactions" value="28"/>
</dbReference>
<dbReference type="MINT" id="Q99469"/>
<dbReference type="STRING" id="9606.ENSP00000273183"/>
<dbReference type="TCDB" id="8.A.34.1.2">
    <property type="family name" value="the endophilin (endophilin) family"/>
</dbReference>
<dbReference type="GlyGen" id="Q99469">
    <property type="glycosylation" value="3 sites, 1 O-linked glycan (3 sites)"/>
</dbReference>
<dbReference type="iPTMnet" id="Q99469"/>
<dbReference type="PhosphoSitePlus" id="Q99469"/>
<dbReference type="BioMuta" id="STAC"/>
<dbReference type="DMDM" id="12229989"/>
<dbReference type="MassIVE" id="Q99469"/>
<dbReference type="PaxDb" id="9606-ENSP00000273183"/>
<dbReference type="PeptideAtlas" id="Q99469"/>
<dbReference type="ProteomicsDB" id="78285"/>
<dbReference type="Antibodypedia" id="28130">
    <property type="antibodies" value="162 antibodies from 25 providers"/>
</dbReference>
<dbReference type="DNASU" id="6769"/>
<dbReference type="Ensembl" id="ENST00000273183.8">
    <property type="protein sequence ID" value="ENSP00000273183.3"/>
    <property type="gene ID" value="ENSG00000144681.11"/>
</dbReference>
<dbReference type="GeneID" id="6769"/>
<dbReference type="KEGG" id="hsa:6769"/>
<dbReference type="MANE-Select" id="ENST00000273183.8">
    <property type="protein sequence ID" value="ENSP00000273183.3"/>
    <property type="RefSeq nucleotide sequence ID" value="NM_003149.3"/>
    <property type="RefSeq protein sequence ID" value="NP_003140.1"/>
</dbReference>
<dbReference type="UCSC" id="uc003cgh.2">
    <property type="organism name" value="human"/>
</dbReference>
<dbReference type="AGR" id="HGNC:11353"/>
<dbReference type="CTD" id="6769"/>
<dbReference type="DisGeNET" id="6769"/>
<dbReference type="GeneCards" id="STAC"/>
<dbReference type="HGNC" id="HGNC:11353">
    <property type="gene designation" value="STAC"/>
</dbReference>
<dbReference type="HPA" id="ENSG00000144681">
    <property type="expression patterns" value="Tissue enhanced (prostate)"/>
</dbReference>
<dbReference type="MIM" id="602317">
    <property type="type" value="gene"/>
</dbReference>
<dbReference type="neXtProt" id="NX_Q99469"/>
<dbReference type="OpenTargets" id="ENSG00000144681"/>
<dbReference type="PharmGKB" id="PA36175"/>
<dbReference type="VEuPathDB" id="HostDB:ENSG00000144681"/>
<dbReference type="eggNOG" id="ENOG502QW0M">
    <property type="taxonomic scope" value="Eukaryota"/>
</dbReference>
<dbReference type="GeneTree" id="ENSGT00950000183092"/>
<dbReference type="HOGENOM" id="CLU_048120_2_0_1"/>
<dbReference type="InParanoid" id="Q99469"/>
<dbReference type="OMA" id="IYRCVRT"/>
<dbReference type="OrthoDB" id="9991832at2759"/>
<dbReference type="PAN-GO" id="Q99469">
    <property type="GO annotations" value="5 GO annotations based on evolutionary models"/>
</dbReference>
<dbReference type="PhylomeDB" id="Q99469"/>
<dbReference type="TreeFam" id="TF332878"/>
<dbReference type="PathwayCommons" id="Q99469"/>
<dbReference type="SignaLink" id="Q99469"/>
<dbReference type="BioGRID-ORCS" id="6769">
    <property type="hits" value="8 hits in 1136 CRISPR screens"/>
</dbReference>
<dbReference type="ChiTaRS" id="STAC">
    <property type="organism name" value="human"/>
</dbReference>
<dbReference type="EvolutionaryTrace" id="Q99469"/>
<dbReference type="GenomeRNAi" id="6769"/>
<dbReference type="Pharos" id="Q99469">
    <property type="development level" value="Tbio"/>
</dbReference>
<dbReference type="PRO" id="PR:Q99469"/>
<dbReference type="Proteomes" id="UP000005640">
    <property type="component" value="Chromosome 3"/>
</dbReference>
<dbReference type="RNAct" id="Q99469">
    <property type="molecule type" value="protein"/>
</dbReference>
<dbReference type="Bgee" id="ENSG00000144681">
    <property type="expression patterns" value="Expressed in dorsal root ganglion and 145 other cell types or tissues"/>
</dbReference>
<dbReference type="ExpressionAtlas" id="Q99469">
    <property type="expression patterns" value="baseline and differential"/>
</dbReference>
<dbReference type="GO" id="GO:0009898">
    <property type="term" value="C:cytoplasmic side of plasma membrane"/>
    <property type="evidence" value="ECO:0000250"/>
    <property type="project" value="UniProtKB"/>
</dbReference>
<dbReference type="GO" id="GO:0005829">
    <property type="term" value="C:cytosol"/>
    <property type="evidence" value="ECO:0000303"/>
    <property type="project" value="UniProtKB"/>
</dbReference>
<dbReference type="GO" id="GO:0030315">
    <property type="term" value="C:T-tubule"/>
    <property type="evidence" value="ECO:0007669"/>
    <property type="project" value="Ensembl"/>
</dbReference>
<dbReference type="GO" id="GO:0044325">
    <property type="term" value="F:transmembrane transporter binding"/>
    <property type="evidence" value="ECO:0000318"/>
    <property type="project" value="GO_Central"/>
</dbReference>
<dbReference type="GO" id="GO:0008270">
    <property type="term" value="F:zinc ion binding"/>
    <property type="evidence" value="ECO:0007669"/>
    <property type="project" value="UniProtKB-KW"/>
</dbReference>
<dbReference type="GO" id="GO:0034605">
    <property type="term" value="P:cellular response to heat"/>
    <property type="evidence" value="ECO:0007669"/>
    <property type="project" value="Ensembl"/>
</dbReference>
<dbReference type="GO" id="GO:2001259">
    <property type="term" value="P:positive regulation of cation channel activity"/>
    <property type="evidence" value="ECO:0000250"/>
    <property type="project" value="UniProtKB"/>
</dbReference>
<dbReference type="GO" id="GO:1903078">
    <property type="term" value="P:positive regulation of protein localization to plasma membrane"/>
    <property type="evidence" value="ECO:0000250"/>
    <property type="project" value="UniProtKB"/>
</dbReference>
<dbReference type="GO" id="GO:1901387">
    <property type="term" value="P:positive regulation of voltage-gated calcium channel activity"/>
    <property type="evidence" value="ECO:0000250"/>
    <property type="project" value="UniProtKB"/>
</dbReference>
<dbReference type="GO" id="GO:0007165">
    <property type="term" value="P:signal transduction"/>
    <property type="evidence" value="ECO:0000303"/>
    <property type="project" value="UniProtKB"/>
</dbReference>
<dbReference type="GO" id="GO:0003009">
    <property type="term" value="P:skeletal muscle contraction"/>
    <property type="evidence" value="ECO:0000318"/>
    <property type="project" value="GO_Central"/>
</dbReference>
<dbReference type="CDD" id="cd20880">
    <property type="entry name" value="C1_Stac1"/>
    <property type="match status" value="1"/>
</dbReference>
<dbReference type="CDD" id="cd11833">
    <property type="entry name" value="SH3_Stac_1"/>
    <property type="match status" value="1"/>
</dbReference>
<dbReference type="CDD" id="cd11834">
    <property type="entry name" value="SH3_Stac_2"/>
    <property type="match status" value="1"/>
</dbReference>
<dbReference type="FunFam" id="3.30.60.20:FF:000044">
    <property type="entry name" value="SH3 and cysteine-rich domain-containing protein"/>
    <property type="match status" value="1"/>
</dbReference>
<dbReference type="FunFam" id="2.30.30.40:FF:000073">
    <property type="entry name" value="SH3 and cysteine-rich domain-containing protein 2"/>
    <property type="match status" value="1"/>
</dbReference>
<dbReference type="Gene3D" id="3.30.60.20">
    <property type="match status" value="1"/>
</dbReference>
<dbReference type="Gene3D" id="2.30.30.40">
    <property type="entry name" value="SH3 Domains"/>
    <property type="match status" value="1"/>
</dbReference>
<dbReference type="InterPro" id="IPR046349">
    <property type="entry name" value="C1-like_sf"/>
</dbReference>
<dbReference type="InterPro" id="IPR002219">
    <property type="entry name" value="PE/DAG-bd"/>
</dbReference>
<dbReference type="InterPro" id="IPR036028">
    <property type="entry name" value="SH3-like_dom_sf"/>
</dbReference>
<dbReference type="InterPro" id="IPR001452">
    <property type="entry name" value="SH3_domain"/>
</dbReference>
<dbReference type="InterPro" id="IPR039688">
    <property type="entry name" value="STAC1/2/3"/>
</dbReference>
<dbReference type="InterPro" id="IPR035508">
    <property type="entry name" value="STAC1_SH3"/>
</dbReference>
<dbReference type="PANTHER" id="PTHR15135:SF3">
    <property type="entry name" value="SH3 AND CYSTEINE-RICH DOMAIN-CONTAINING PROTEIN"/>
    <property type="match status" value="1"/>
</dbReference>
<dbReference type="PANTHER" id="PTHR15135">
    <property type="entry name" value="STAC"/>
    <property type="match status" value="1"/>
</dbReference>
<dbReference type="Pfam" id="PF00130">
    <property type="entry name" value="C1_1"/>
    <property type="match status" value="1"/>
</dbReference>
<dbReference type="Pfam" id="PF00018">
    <property type="entry name" value="SH3_1"/>
    <property type="match status" value="1"/>
</dbReference>
<dbReference type="Pfam" id="PF07653">
    <property type="entry name" value="SH3_2"/>
    <property type="match status" value="1"/>
</dbReference>
<dbReference type="Pfam" id="PF16664">
    <property type="entry name" value="STAC2_u1"/>
    <property type="match status" value="1"/>
</dbReference>
<dbReference type="PRINTS" id="PR00452">
    <property type="entry name" value="SH3DOMAIN"/>
</dbReference>
<dbReference type="PRINTS" id="PR01887">
    <property type="entry name" value="SPECTRNALPHA"/>
</dbReference>
<dbReference type="SMART" id="SM00109">
    <property type="entry name" value="C1"/>
    <property type="match status" value="1"/>
</dbReference>
<dbReference type="SMART" id="SM00326">
    <property type="entry name" value="SH3"/>
    <property type="match status" value="1"/>
</dbReference>
<dbReference type="SUPFAM" id="SSF57889">
    <property type="entry name" value="Cysteine-rich domain"/>
    <property type="match status" value="1"/>
</dbReference>
<dbReference type="SUPFAM" id="SSF50044">
    <property type="entry name" value="SH3-domain"/>
    <property type="match status" value="1"/>
</dbReference>
<dbReference type="PROSITE" id="PS50002">
    <property type="entry name" value="SH3"/>
    <property type="match status" value="2"/>
</dbReference>
<dbReference type="PROSITE" id="PS00479">
    <property type="entry name" value="ZF_DAG_PE_1"/>
    <property type="match status" value="1"/>
</dbReference>
<dbReference type="PROSITE" id="PS50081">
    <property type="entry name" value="ZF_DAG_PE_2"/>
    <property type="match status" value="1"/>
</dbReference>
<reference key="1">
    <citation type="journal article" date="1996" name="Biochem. Biophys. Res. Commun.">
        <title>Stac, a novel neuron-specific protein with cysteine-rich and SH3 domains.</title>
        <authorList>
            <person name="Suzuki H."/>
            <person name="Kawai J."/>
            <person name="Taga C."/>
            <person name="Yaoi T."/>
            <person name="Hara A."/>
            <person name="Hirose K."/>
            <person name="Hayashizaki Y."/>
            <person name="Watanabe S."/>
        </authorList>
    </citation>
    <scope>NUCLEOTIDE SEQUENCE [MRNA]</scope>
    <source>
        <tissue>Brain</tissue>
    </source>
</reference>
<reference key="2">
    <citation type="journal article" date="2004" name="Nat. Genet.">
        <title>Complete sequencing and characterization of 21,243 full-length human cDNAs.</title>
        <authorList>
            <person name="Ota T."/>
            <person name="Suzuki Y."/>
            <person name="Nishikawa T."/>
            <person name="Otsuki T."/>
            <person name="Sugiyama T."/>
            <person name="Irie R."/>
            <person name="Wakamatsu A."/>
            <person name="Hayashi K."/>
            <person name="Sato H."/>
            <person name="Nagai K."/>
            <person name="Kimura K."/>
            <person name="Makita H."/>
            <person name="Sekine M."/>
            <person name="Obayashi M."/>
            <person name="Nishi T."/>
            <person name="Shibahara T."/>
            <person name="Tanaka T."/>
            <person name="Ishii S."/>
            <person name="Yamamoto J."/>
            <person name="Saito K."/>
            <person name="Kawai Y."/>
            <person name="Isono Y."/>
            <person name="Nakamura Y."/>
            <person name="Nagahari K."/>
            <person name="Murakami K."/>
            <person name="Yasuda T."/>
            <person name="Iwayanagi T."/>
            <person name="Wagatsuma M."/>
            <person name="Shiratori A."/>
            <person name="Sudo H."/>
            <person name="Hosoiri T."/>
            <person name="Kaku Y."/>
            <person name="Kodaira H."/>
            <person name="Kondo H."/>
            <person name="Sugawara M."/>
            <person name="Takahashi M."/>
            <person name="Kanda K."/>
            <person name="Yokoi T."/>
            <person name="Furuya T."/>
            <person name="Kikkawa E."/>
            <person name="Omura Y."/>
            <person name="Abe K."/>
            <person name="Kamihara K."/>
            <person name="Katsuta N."/>
            <person name="Sato K."/>
            <person name="Tanikawa M."/>
            <person name="Yamazaki M."/>
            <person name="Ninomiya K."/>
            <person name="Ishibashi T."/>
            <person name="Yamashita H."/>
            <person name="Murakawa K."/>
            <person name="Fujimori K."/>
            <person name="Tanai H."/>
            <person name="Kimata M."/>
            <person name="Watanabe M."/>
            <person name="Hiraoka S."/>
            <person name="Chiba Y."/>
            <person name="Ishida S."/>
            <person name="Ono Y."/>
            <person name="Takiguchi S."/>
            <person name="Watanabe S."/>
            <person name="Yosida M."/>
            <person name="Hotuta T."/>
            <person name="Kusano J."/>
            <person name="Kanehori K."/>
            <person name="Takahashi-Fujii A."/>
            <person name="Hara H."/>
            <person name="Tanase T.-O."/>
            <person name="Nomura Y."/>
            <person name="Togiya S."/>
            <person name="Komai F."/>
            <person name="Hara R."/>
            <person name="Takeuchi K."/>
            <person name="Arita M."/>
            <person name="Imose N."/>
            <person name="Musashino K."/>
            <person name="Yuuki H."/>
            <person name="Oshima A."/>
            <person name="Sasaki N."/>
            <person name="Aotsuka S."/>
            <person name="Yoshikawa Y."/>
            <person name="Matsunawa H."/>
            <person name="Ichihara T."/>
            <person name="Shiohata N."/>
            <person name="Sano S."/>
            <person name="Moriya S."/>
            <person name="Momiyama H."/>
            <person name="Satoh N."/>
            <person name="Takami S."/>
            <person name="Terashima Y."/>
            <person name="Suzuki O."/>
            <person name="Nakagawa S."/>
            <person name="Senoh A."/>
            <person name="Mizoguchi H."/>
            <person name="Goto Y."/>
            <person name="Shimizu F."/>
            <person name="Wakebe H."/>
            <person name="Hishigaki H."/>
            <person name="Watanabe T."/>
            <person name="Sugiyama A."/>
            <person name="Takemoto M."/>
            <person name="Kawakami B."/>
            <person name="Yamazaki M."/>
            <person name="Watanabe K."/>
            <person name="Kumagai A."/>
            <person name="Itakura S."/>
            <person name="Fukuzumi Y."/>
            <person name="Fujimori Y."/>
            <person name="Komiyama M."/>
            <person name="Tashiro H."/>
            <person name="Tanigami A."/>
            <person name="Fujiwara T."/>
            <person name="Ono T."/>
            <person name="Yamada K."/>
            <person name="Fujii Y."/>
            <person name="Ozaki K."/>
            <person name="Hirao M."/>
            <person name="Ohmori Y."/>
            <person name="Kawabata A."/>
            <person name="Hikiji T."/>
            <person name="Kobatake N."/>
            <person name="Inagaki H."/>
            <person name="Ikema Y."/>
            <person name="Okamoto S."/>
            <person name="Okitani R."/>
            <person name="Kawakami T."/>
            <person name="Noguchi S."/>
            <person name="Itoh T."/>
            <person name="Shigeta K."/>
            <person name="Senba T."/>
            <person name="Matsumura K."/>
            <person name="Nakajima Y."/>
            <person name="Mizuno T."/>
            <person name="Morinaga M."/>
            <person name="Sasaki M."/>
            <person name="Togashi T."/>
            <person name="Oyama M."/>
            <person name="Hata H."/>
            <person name="Watanabe M."/>
            <person name="Komatsu T."/>
            <person name="Mizushima-Sugano J."/>
            <person name="Satoh T."/>
            <person name="Shirai Y."/>
            <person name="Takahashi Y."/>
            <person name="Nakagawa K."/>
            <person name="Okumura K."/>
            <person name="Nagase T."/>
            <person name="Nomura N."/>
            <person name="Kikuchi H."/>
            <person name="Masuho Y."/>
            <person name="Yamashita R."/>
            <person name="Nakai K."/>
            <person name="Yada T."/>
            <person name="Nakamura Y."/>
            <person name="Ohara O."/>
            <person name="Isogai T."/>
            <person name="Sugano S."/>
        </authorList>
    </citation>
    <scope>NUCLEOTIDE SEQUENCE [LARGE SCALE MRNA]</scope>
    <source>
        <tissue>Umbilical cord blood</tissue>
    </source>
</reference>
<reference key="3">
    <citation type="submission" date="2005-07" db="EMBL/GenBank/DDBJ databases">
        <authorList>
            <person name="Mural R.J."/>
            <person name="Istrail S."/>
            <person name="Sutton G.G."/>
            <person name="Florea L."/>
            <person name="Halpern A.L."/>
            <person name="Mobarry C.M."/>
            <person name="Lippert R."/>
            <person name="Walenz B."/>
            <person name="Shatkay H."/>
            <person name="Dew I."/>
            <person name="Miller J.R."/>
            <person name="Flanigan M.J."/>
            <person name="Edwards N.J."/>
            <person name="Bolanos R."/>
            <person name="Fasulo D."/>
            <person name="Halldorsson B.V."/>
            <person name="Hannenhalli S."/>
            <person name="Turner R."/>
            <person name="Yooseph S."/>
            <person name="Lu F."/>
            <person name="Nusskern D.R."/>
            <person name="Shue B.C."/>
            <person name="Zheng X.H."/>
            <person name="Zhong F."/>
            <person name="Delcher A.L."/>
            <person name="Huson D.H."/>
            <person name="Kravitz S.A."/>
            <person name="Mouchard L."/>
            <person name="Reinert K."/>
            <person name="Remington K.A."/>
            <person name="Clark A.G."/>
            <person name="Waterman M.S."/>
            <person name="Eichler E.E."/>
            <person name="Adams M.D."/>
            <person name="Hunkapiller M.W."/>
            <person name="Myers E.W."/>
            <person name="Venter J.C."/>
        </authorList>
    </citation>
    <scope>NUCLEOTIDE SEQUENCE [LARGE SCALE GENOMIC DNA]</scope>
</reference>
<reference key="4">
    <citation type="submission" date="2006-10" db="PDB data bank">
        <title>Solution structure of the first SH3 domain of STAC protein.</title>
        <authorList>
            <consortium name="RIKEN structural genomics initiative (RSGI)"/>
        </authorList>
    </citation>
    <scope>STRUCTURE BY NMR OF 288-342</scope>
</reference>
<reference evidence="7" key="5">
    <citation type="journal article" date="2017" name="Proc. Natl. Acad. Sci. U.S.A.">
        <title>Structural insights into binding of STAC proteins to voltage-gated calcium channels.</title>
        <authorList>
            <person name="Wong King Yuen S.M."/>
            <person name="Campiglio M."/>
            <person name="Tung C.C."/>
            <person name="Flucher B.E."/>
            <person name="Van Petegem F."/>
        </authorList>
    </citation>
    <scope>X-RAY CRYSTALLOGRAPHY (2.39 ANGSTROMS) OF 288-402</scope>
    <scope>INTERACTION WITH CACNA1S</scope>
</reference>
<organism>
    <name type="scientific">Homo sapiens</name>
    <name type="common">Human</name>
    <dbReference type="NCBI Taxonomy" id="9606"/>
    <lineage>
        <taxon>Eukaryota</taxon>
        <taxon>Metazoa</taxon>
        <taxon>Chordata</taxon>
        <taxon>Craniata</taxon>
        <taxon>Vertebrata</taxon>
        <taxon>Euteleostomi</taxon>
        <taxon>Mammalia</taxon>
        <taxon>Eutheria</taxon>
        <taxon>Euarchontoglires</taxon>
        <taxon>Primates</taxon>
        <taxon>Haplorrhini</taxon>
        <taxon>Catarrhini</taxon>
        <taxon>Hominidae</taxon>
        <taxon>Homo</taxon>
    </lineage>
</organism>
<proteinExistence type="evidence at protein level"/>
<comment type="function">
    <text evidence="1">Promotes expression of the ion channel CACNA1H at the cell membrane, and thereby contributes to the regulation of channel activity. Plays a minor and redundant role in promoting the expression of calcium channel CACNA1S at the cell membrane, and thereby contributes to increased channel activity. Slows down the inactivation rate of the calcium channel CACNA1C.</text>
</comment>
<comment type="subunit">
    <text evidence="1 5">Interacts (via SH3 domains) with CACNA1S (PubMed:29078335). Interacts with CACNA1H. Interacts with CACNA1C (By similarity).</text>
</comment>
<comment type="interaction">
    <interactant intactId="EBI-2652799">
        <id>Q99469</id>
    </interactant>
    <interactant intactId="EBI-11954292">
        <id>Q86V38</id>
        <label>ATN1</label>
    </interactant>
    <organismsDiffer>false</organismsDiffer>
    <experiments>3</experiments>
</comment>
<comment type="interaction">
    <interactant intactId="EBI-2652799">
        <id>Q99469</id>
    </interactant>
    <interactant intactId="EBI-348399">
        <id>P22607</id>
        <label>FGFR3</label>
    </interactant>
    <organismsDiffer>false</organismsDiffer>
    <experiments>3</experiments>
</comment>
<comment type="interaction">
    <interactant intactId="EBI-2652799">
        <id>Q99469</id>
    </interactant>
    <interactant intactId="EBI-618309">
        <id>Q08379</id>
        <label>GOLGA2</label>
    </interactant>
    <organismsDiffer>false</organismsDiffer>
    <experiments>3</experiments>
</comment>
<comment type="interaction">
    <interactant intactId="EBI-2652799">
        <id>Q99469</id>
    </interactant>
    <interactant intactId="EBI-2556193">
        <id>Q63ZY3</id>
        <label>KANK2</label>
    </interactant>
    <organismsDiffer>false</organismsDiffer>
    <experiments>3</experiments>
</comment>
<comment type="interaction">
    <interactant intactId="EBI-2652799">
        <id>Q99469</id>
    </interactant>
    <interactant intactId="EBI-10181113">
        <id>Q8N8K9</id>
        <label>KIAA1958</label>
    </interactant>
    <organismsDiffer>false</organismsDiffer>
    <experiments>3</experiments>
</comment>
<comment type="interaction">
    <interactant intactId="EBI-2652799">
        <id>Q99469</id>
    </interactant>
    <interactant intactId="EBI-2432309">
        <id>Q92876</id>
        <label>KLK6</label>
    </interactant>
    <organismsDiffer>false</organismsDiffer>
    <experiments>3</experiments>
</comment>
<comment type="interaction">
    <interactant intactId="EBI-2652799">
        <id>Q99469</id>
    </interactant>
    <interactant intactId="EBI-741037">
        <id>Q9BRK4</id>
        <label>LZTS2</label>
    </interactant>
    <organismsDiffer>false</organismsDiffer>
    <experiments>3</experiments>
</comment>
<comment type="interaction">
    <interactant intactId="EBI-2652799">
        <id>Q99469</id>
    </interactant>
    <interactant intactId="EBI-16439278">
        <id>Q6FHY5</id>
        <label>MEOX2</label>
    </interactant>
    <organismsDiffer>false</organismsDiffer>
    <experiments>3</experiments>
</comment>
<comment type="interaction">
    <interactant intactId="EBI-2652799">
        <id>Q99469</id>
    </interactant>
    <interactant intactId="EBI-10963850">
        <id>Q9NZQ3-3</id>
        <label>NCKIPSD</label>
    </interactant>
    <organismsDiffer>false</organismsDiffer>
    <experiments>3</experiments>
</comment>
<comment type="interaction">
    <interactant intactId="EBI-2652799">
        <id>Q99469</id>
    </interactant>
    <interactant intactId="EBI-22310682">
        <id>P0DPK4</id>
        <label>NOTCH2NLC</label>
    </interactant>
    <organismsDiffer>false</organismsDiffer>
    <experiments>3</experiments>
</comment>
<comment type="interaction">
    <interactant intactId="EBI-2652799">
        <id>Q99469</id>
    </interactant>
    <interactant intactId="EBI-2795348">
        <id>Q9UGN5</id>
        <label>PARP2</label>
    </interactant>
    <organismsDiffer>false</organismsDiffer>
    <experiments>2</experiments>
</comment>
<comment type="interaction">
    <interactant intactId="EBI-2652799">
        <id>Q99469</id>
    </interactant>
    <interactant intactId="EBI-296331">
        <id>Q02548</id>
        <label>PAX5</label>
    </interactant>
    <organismsDiffer>false</organismsDiffer>
    <experiments>3</experiments>
</comment>
<comment type="interaction">
    <interactant intactId="EBI-2652799">
        <id>Q99469</id>
    </interactant>
    <interactant intactId="EBI-747278">
        <id>P26367</id>
        <label>PAX6</label>
    </interactant>
    <organismsDiffer>false</organismsDiffer>
    <experiments>3</experiments>
</comment>
<comment type="interaction">
    <interactant intactId="EBI-2652799">
        <id>Q99469</id>
    </interactant>
    <interactant intactId="EBI-12029004">
        <id>P78424</id>
        <label>POU6F2</label>
    </interactant>
    <organismsDiffer>false</organismsDiffer>
    <experiments>3</experiments>
</comment>
<comment type="interaction">
    <interactant intactId="EBI-2652799">
        <id>Q99469</id>
    </interactant>
    <interactant intactId="EBI-751555">
        <id>Q9H0X6</id>
        <label>RNF208</label>
    </interactant>
    <organismsDiffer>false</organismsDiffer>
    <experiments>3</experiments>
</comment>
<comment type="interaction">
    <interactant intactId="EBI-2652799">
        <id>Q99469</id>
    </interactant>
    <interactant intactId="EBI-1186119">
        <id>P51692</id>
        <label>STAT5B</label>
    </interactant>
    <organismsDiffer>false</organismsDiffer>
    <experiments>3</experiments>
</comment>
<comment type="interaction">
    <interactant intactId="EBI-2652799">
        <id>Q99469</id>
    </interactant>
    <interactant intactId="EBI-741480">
        <id>Q9UMX0</id>
        <label>UBQLN1</label>
    </interactant>
    <organismsDiffer>false</organismsDiffer>
    <experiments>3</experiments>
</comment>
<comment type="interaction">
    <interactant intactId="EBI-2652799">
        <id>Q99469</id>
    </interactant>
    <interactant intactId="EBI-356498">
        <id>P62258</id>
        <label>YWHAE</label>
    </interactant>
    <organismsDiffer>false</organismsDiffer>
    <experiments>4</experiments>
</comment>
<comment type="subcellular location">
    <subcellularLocation>
        <location evidence="1">Cytoplasm</location>
        <location evidence="1">Cytosol</location>
    </subcellularLocation>
    <subcellularLocation>
        <location evidence="1">Cell membrane</location>
        <topology evidence="1">Peripheral membrane protein</topology>
        <orientation evidence="1">Cytoplasmic side</orientation>
    </subcellularLocation>
    <subcellularLocation>
        <location evidence="1">Cell membrane</location>
        <location evidence="1">Sarcolemma</location>
        <topology evidence="1">Peripheral membrane protein</topology>
        <orientation evidence="1">Cytoplasmic side</orientation>
    </subcellularLocation>
</comment>
<name>STAC_HUMAN</name>
<protein>
    <recommendedName>
        <fullName>SH3 and cysteine-rich domain-containing protein</fullName>
    </recommendedName>
    <alternativeName>
        <fullName>Src homology 3 and cysteine-rich domain-containing protein</fullName>
    </alternativeName>
</protein>
<feature type="chain" id="PRO_0000072235" description="SH3 and cysteine-rich domain-containing protein">
    <location>
        <begin position="1"/>
        <end position="402"/>
    </location>
</feature>
<feature type="domain" description="SH3 1" evidence="2">
    <location>
        <begin position="285"/>
        <end position="344"/>
    </location>
</feature>
<feature type="domain" description="SH3 2" evidence="2">
    <location>
        <begin position="347"/>
        <end position="402"/>
    </location>
</feature>
<feature type="zinc finger region" description="Phorbol-ester/DAG-type" evidence="3">
    <location>
        <begin position="107"/>
        <end position="159"/>
    </location>
</feature>
<feature type="region of interest" description="Disordered" evidence="4">
    <location>
        <begin position="1"/>
        <end position="47"/>
    </location>
</feature>
<feature type="region of interest" description="Disordered" evidence="4">
    <location>
        <begin position="211"/>
        <end position="247"/>
    </location>
</feature>
<feature type="sequence variant" id="VAR_034505" description="In dbSNP:rs7634545.">
    <original>N</original>
    <variation>S</variation>
    <location>
        <position position="262"/>
    </location>
</feature>
<feature type="strand" evidence="8">
    <location>
        <begin position="289"/>
        <end position="294"/>
    </location>
</feature>
<feature type="strand" evidence="8">
    <location>
        <begin position="311"/>
        <end position="316"/>
    </location>
</feature>
<feature type="strand" evidence="8">
    <location>
        <begin position="319"/>
        <end position="327"/>
    </location>
</feature>
<feature type="strand" evidence="8">
    <location>
        <begin position="330"/>
        <end position="335"/>
    </location>
</feature>
<feature type="helix" evidence="8">
    <location>
        <begin position="336"/>
        <end position="338"/>
    </location>
</feature>
<feature type="strand" evidence="8">
    <location>
        <begin position="339"/>
        <end position="341"/>
    </location>
</feature>
<feature type="strand" evidence="8">
    <location>
        <begin position="347"/>
        <end position="353"/>
    </location>
</feature>
<feature type="helix" evidence="8">
    <location>
        <begin position="359"/>
        <end position="361"/>
    </location>
</feature>
<feature type="strand" evidence="8">
    <location>
        <begin position="371"/>
        <end position="374"/>
    </location>
</feature>
<feature type="strand" evidence="8">
    <location>
        <begin position="382"/>
        <end position="387"/>
    </location>
</feature>
<feature type="strand" evidence="8">
    <location>
        <begin position="390"/>
        <end position="395"/>
    </location>
</feature>
<feature type="helix" evidence="8">
    <location>
        <begin position="396"/>
        <end position="398"/>
    </location>
</feature>
<accession>Q99469</accession>
<accession>B2R8S8</accession>
<keyword id="KW-0002">3D-structure</keyword>
<keyword id="KW-1003">Cell membrane</keyword>
<keyword id="KW-0963">Cytoplasm</keyword>
<keyword id="KW-0472">Membrane</keyword>
<keyword id="KW-0479">Metal-binding</keyword>
<keyword id="KW-1267">Proteomics identification</keyword>
<keyword id="KW-1185">Reference proteome</keyword>
<keyword id="KW-0677">Repeat</keyword>
<keyword id="KW-0728">SH3 domain</keyword>
<keyword id="KW-0862">Zinc</keyword>
<keyword id="KW-0863">Zinc-finger</keyword>